<protein>
    <recommendedName>
        <fullName evidence="6 7">Phosphatidylethanolamine transferase Mcr-2</fullName>
        <ecNumber evidence="9">2.7.8.43</ecNumber>
    </recommendedName>
    <alternativeName>
        <fullName evidence="1">Polymyxin resistance protein MCR-2</fullName>
    </alternativeName>
</protein>
<organism evidence="10">
    <name type="scientific">Escherichia coli</name>
    <dbReference type="NCBI Taxonomy" id="562"/>
    <lineage>
        <taxon>Bacteria</taxon>
        <taxon>Pseudomonadati</taxon>
        <taxon>Pseudomonadota</taxon>
        <taxon>Gammaproteobacteria</taxon>
        <taxon>Enterobacterales</taxon>
        <taxon>Enterobacteriaceae</taxon>
        <taxon>Escherichia</taxon>
    </lineage>
</organism>
<reference evidence="10" key="1">
    <citation type="journal article" date="2016" name="Eurosurveillance">
        <title>Identification of a novel plasmid-mediated colistin-resistance gene, mcr-2, in Escherichia coli, Belgium, June 2016.</title>
        <authorList>
            <person name="Xavier B.B."/>
            <person name="Lammens C."/>
            <person name="Ruhal R."/>
            <person name="Kumar-Singh S."/>
            <person name="Butaye P."/>
            <person name="Goossens H."/>
            <person name="Malhotra-Kumar S."/>
        </authorList>
    </citation>
    <scope>NUCLEOTIDE SEQUENCE [GENOMIC DNA]</scope>
    <source>
        <strain evidence="10">KP37</strain>
        <plasmid evidence="10">pKP37-BE</plasmid>
    </source>
</reference>
<reference evidence="11" key="2">
    <citation type="journal article" date="2023" name="Front. Microbiol.">
        <title>Virotyping and genetic antimicrobial susceptibility testing of porcine ETEC/STEC strains and associated plasmid types.</title>
        <authorList>
            <person name="Vereecke N."/>
            <person name="Van Hoorde S."/>
            <person name="Sperling D."/>
            <person name="Theuns S."/>
            <person name="Devriendt B."/>
            <person name="Cox E."/>
        </authorList>
    </citation>
    <scope>NUCLEOTIDE SEQUENCE [LARGE SCALE GENOMIC DNA]</scope>
    <source>
        <strain evidence="11">ETEC4085</strain>
        <plasmid evidence="11">unnamed5</plasmid>
    </source>
</reference>
<reference evidence="12" key="3">
    <citation type="journal article" date="2017" name="Acta Crystallogr. F Struct. Biol. Commun.">
        <title>1.12A resolution crystal structure of the catalytic domain of the plasmid-mediated colistin resistance determinant MCR-2.</title>
        <authorList>
            <person name="Coates K."/>
            <person name="Walsh T.R."/>
            <person name="Spencer J."/>
            <person name="Hinchliffe P."/>
        </authorList>
    </citation>
    <scope>X-RAY CRYSTALLOGRAPHY (1.12 ANGSTROMS) OF 217-538 IN COMPLEX WITH ZN(2+)</scope>
    <scope>DISULFIDE BONDS</scope>
    <source>
        <plasmid evidence="11">unnamed5</plasmid>
    </source>
</reference>
<reference evidence="13" key="4">
    <citation type="journal article" date="2018" name="Sci. China Life Sci.">
        <title>Structural and functional insights into MCR-2 mediated colistin resistance.</title>
        <authorList>
            <person name="Wang X."/>
            <person name="Lu Q."/>
            <person name="Qi J."/>
            <person name="Chai Y."/>
            <person name="Wang Y."/>
            <person name="Gao G.F."/>
        </authorList>
    </citation>
    <scope>X-RAY CRYSTALLOGRAPHY (2.99 ANGSTROMS) OF 215-538 IN COMPLEX WITH ZN(2+)</scope>
    <scope>DISULFIDE BONDS</scope>
    <scope>FUNCTION</scope>
    <scope>CATALYTIC ACTIVITY</scope>
    <scope>MUTAGENESIS OF PHE-91; TYR-99; MET-103; ASN-106; THR-110; GLU-114; SER-115; PHE-123; THR-283; LYS-331 AND HIS-476</scope>
    <source>
        <plasmid evidence="11">unnamed5</plasmid>
    </source>
</reference>
<reference evidence="14" key="5">
    <citation type="journal article" date="2020" name="Chem. Commun. (Camb.)">
        <title>Resistance to the 'last resort' antibiotic colistin: a single-zinc mechanism for phosphointermediate formation in MCR enzymes.</title>
        <authorList>
            <person name="Lythell E."/>
            <person name="Suardiaz R."/>
            <person name="Hinchliffe P."/>
            <person name="Hanpaibool C."/>
            <person name="Visitsatthawong S."/>
            <person name="Oliveira A.S.F."/>
            <person name="Lang E.J.M."/>
            <person name="Surawatanawong P."/>
            <person name="Lee V.S."/>
            <person name="Rungrotmongkol T."/>
            <person name="Fey N."/>
            <person name="Spencer J."/>
            <person name="Mulholland A.J."/>
        </authorList>
    </citation>
    <scope>X-RAY CRYSTALLOGRAPHY (1.20 ANGSTROMS) OF 217-538 IN COMPLEX WITH ZN(2+)</scope>
    <scope>PHOSPHORYLATION AT THR-283</scope>
    <scope>DISULFIDE BONDS</scope>
    <source>
        <plasmid evidence="11">unnamed5</plasmid>
    </source>
</reference>
<proteinExistence type="evidence at protein level"/>
<geneLocation type="plasmid" evidence="10">
    <name>pKP37-BE</name>
</geneLocation>
<geneLocation type="plasmid" evidence="11">
    <name>unnamed5</name>
</geneLocation>
<feature type="chain" id="PRO_0000462299" description="Phosphatidylethanolamine transferase Mcr-2">
    <location>
        <begin position="1"/>
        <end position="538"/>
    </location>
</feature>
<feature type="transmembrane region" description="Helical" evidence="2">
    <location>
        <begin position="14"/>
        <end position="34"/>
    </location>
</feature>
<feature type="transmembrane region" description="Helical" evidence="2">
    <location>
        <begin position="47"/>
        <end position="67"/>
    </location>
</feature>
<feature type="transmembrane region" description="Helical" evidence="2">
    <location>
        <begin position="72"/>
        <end position="92"/>
    </location>
</feature>
<feature type="transmembrane region" description="Helical" evidence="2">
    <location>
        <begin position="121"/>
        <end position="141"/>
    </location>
</feature>
<feature type="transmembrane region" description="Helical" evidence="2">
    <location>
        <begin position="161"/>
        <end position="181"/>
    </location>
</feature>
<feature type="binding site" evidence="3 4 5 12 13 14">
    <location>
        <position position="244"/>
    </location>
    <ligand>
        <name>Zn(2+)</name>
        <dbReference type="ChEBI" id="CHEBI:29105"/>
        <label>1</label>
    </ligand>
</feature>
<feature type="binding site" evidence="3 4 5 12 13 14">
    <location>
        <position position="283"/>
    </location>
    <ligand>
        <name>Zn(2+)</name>
        <dbReference type="ChEBI" id="CHEBI:29105"/>
        <label>1</label>
    </ligand>
</feature>
<feature type="binding site" evidence="3 4 5 12 13 14">
    <location>
        <position position="463"/>
    </location>
    <ligand>
        <name>Zn(2+)</name>
        <dbReference type="ChEBI" id="CHEBI:29105"/>
        <label>1</label>
    </ligand>
</feature>
<feature type="binding site" evidence="3 4 5 12 13 14">
    <location>
        <position position="464"/>
    </location>
    <ligand>
        <name>Zn(2+)</name>
        <dbReference type="ChEBI" id="CHEBI:29105"/>
        <label>1</label>
    </ligand>
</feature>
<feature type="modified residue" description="Phosphothreonine" evidence="5 14">
    <location>
        <position position="283"/>
    </location>
</feature>
<feature type="disulfide bond" evidence="3 4 5 12 13">
    <location>
        <begin position="279"/>
        <end position="289"/>
    </location>
</feature>
<feature type="disulfide bond" evidence="3 4 5 12 13">
    <location>
        <begin position="354"/>
        <end position="362"/>
    </location>
</feature>
<feature type="disulfide bond" evidence="3 4 5 12 13">
    <location>
        <begin position="412"/>
        <end position="420"/>
    </location>
</feature>
<feature type="mutagenesis site" description="No affect on transfer of phosphoethanolamine (PEA) to a lipid A analog in vitro. Reduces resistance of E.coli to colistin about 2-fold, by comparison with the same strain expressing wild-type mcr-2." evidence="4">
    <original>F</original>
    <variation>A</variation>
    <location>
        <position position="91"/>
    </location>
</feature>
<feature type="mutagenesis site" description="Abolishes transfer of phosphoethanolamine (PEA) to a lipid A analog in vitro. Reduces resistance of E.coli to colistin about 4-fold, by comparison with the same strain expressing wild-type mcr-2." evidence="4">
    <original>Y</original>
    <variation>A</variation>
    <location>
        <position position="99"/>
    </location>
</feature>
<feature type="mutagenesis site" description="No affect on transfer of phosphoethanolamine (PEA) to a lipid A analog in vitro. No affect on resistance of E.coli to colistin, by comparison with the same strain expressing wild-type mcr-2." evidence="4">
    <original>M</original>
    <variation>A</variation>
    <location>
        <position position="103"/>
    </location>
</feature>
<feature type="mutagenesis site" description="No affect on transfer of phosphoethanolamine (PEA) to a lipid A analog in vitro. No affect on resistance of E.coli to colistin, by comparison with the same strain expressing wild-type mcr-2." evidence="4">
    <original>N</original>
    <variation>A</variation>
    <location>
        <position position="106"/>
    </location>
</feature>
<feature type="mutagenesis site" description="Abolishes transfer of phosphoethanolamine (PEA) to a lipid A analog in vitro. Reduces resistance of E.coli to colistin about 8-fold, by comparison with the same strain expressing wild-type mcr-2." evidence="4">
    <original>T</original>
    <variation>A</variation>
    <location>
        <position position="110"/>
    </location>
</feature>
<feature type="mutagenesis site" description="Abolishes transfer of phosphoethanolamine (PEA) to a lipid A analog in vitro. Reduces resistance of E.coli to colistin about 8-fold, by comparison with the same strain expressing wild-type mcr-2." evidence="4">
    <original>E</original>
    <variation>A</variation>
    <location>
        <position position="114"/>
    </location>
</feature>
<feature type="mutagenesis site" description="Abolishes transfer of phosphoethanolamine (PEA) to a lipid A analog in vitro. Reduces resistance of E.coli to colistin about 8-fold, by comparison with the same strain expressing wild-type mcr-2." evidence="4">
    <original>S</original>
    <variation>A</variation>
    <location>
        <position position="115"/>
    </location>
</feature>
<feature type="mutagenesis site" description="Slightly reduces efficiency of transfer of phosphoethanolamine (PEA) to a lipid A analog in vitro. Reduces resistance of E.coli to colistin about 2-fold, by comparison with the same strain expressing wild-type mcr-2." evidence="4">
    <original>F</original>
    <variation>A</variation>
    <location>
        <position position="123"/>
    </location>
</feature>
<feature type="mutagenesis site" description="Abolishes transfer of phosphoethanolamine (PEA) to a lipid A analog in vitro. Reduces resistance of E.coli to colistin about 16-fold, by comparison with the same strain expressing wild-type mcr-2." evidence="4">
    <original>T</original>
    <variation>A</variation>
    <location>
        <position position="283"/>
    </location>
</feature>
<feature type="mutagenesis site" description="Abolishes transfer of phosphoethanolamine (PEA) to a lipid A analog in vitro. Reduces resistance of E.coli to colistin about 16-fold, by comparison with the same strain expressing wild-type mcr-2." evidence="4">
    <original>K</original>
    <variation>A</variation>
    <location>
        <position position="331"/>
    </location>
</feature>
<feature type="mutagenesis site" description="Abolishes transfer of phosphoethanolamine (PEA) to a lipid A analog in vitro. Reduces resistance of E.coli to colistin about 8-fold, by comparison with the same strain expressing wild-type mcr-2." evidence="4">
    <original>H</original>
    <variation>A</variation>
    <location>
        <position position="476"/>
    </location>
</feature>
<evidence type="ECO:0000250" key="1">
    <source>
        <dbReference type="UniProtKB" id="A0A0R6L508"/>
    </source>
</evidence>
<evidence type="ECO:0000255" key="2"/>
<evidence type="ECO:0000269" key="3">
    <source>
    </source>
</evidence>
<evidence type="ECO:0000269" key="4">
    <source>
    </source>
</evidence>
<evidence type="ECO:0000269" key="5">
    <source>
    </source>
</evidence>
<evidence type="ECO:0000303" key="6">
    <source>
    </source>
</evidence>
<evidence type="ECO:0000303" key="7">
    <source ref="1"/>
</evidence>
<evidence type="ECO:0000305" key="8"/>
<evidence type="ECO:0000305" key="9">
    <source>
    </source>
</evidence>
<evidence type="ECO:0000312" key="10">
    <source>
        <dbReference type="EMBL" id="SBV31106.1"/>
    </source>
</evidence>
<evidence type="ECO:0000312" key="11">
    <source>
        <dbReference type="EMBL" id="WHI04997.1"/>
    </source>
</evidence>
<evidence type="ECO:0007744" key="12">
    <source>
        <dbReference type="PDB" id="5MX9"/>
    </source>
</evidence>
<evidence type="ECO:0007744" key="13">
    <source>
        <dbReference type="PDB" id="6A7W"/>
    </source>
</evidence>
<evidence type="ECO:0007744" key="14">
    <source>
        <dbReference type="PDB" id="6SUT"/>
    </source>
</evidence>
<gene>
    <name evidence="8" type="primary">mcr2</name>
    <name evidence="10" type="synonym">mcr-2</name>
    <name evidence="11" type="ORF">QDW62_28200</name>
</gene>
<dbReference type="EC" id="2.7.8.43" evidence="9"/>
<dbReference type="EMBL" id="LT598652">
    <property type="protein sequence ID" value="SBV31106.1"/>
    <property type="molecule type" value="Genomic_DNA"/>
</dbReference>
<dbReference type="EMBL" id="CP122639">
    <property type="protein sequence ID" value="WHI04997.1"/>
    <property type="molecule type" value="Genomic_DNA"/>
</dbReference>
<dbReference type="RefSeq" id="WP_065419574.1">
    <property type="nucleotide sequence ID" value="NG_051171.1"/>
</dbReference>
<dbReference type="PDB" id="5MX9">
    <property type="method" value="X-ray"/>
    <property type="resolution" value="1.12 A"/>
    <property type="chains" value="A=217-538"/>
</dbReference>
<dbReference type="PDB" id="6A7W">
    <property type="method" value="X-ray"/>
    <property type="resolution" value="2.99 A"/>
    <property type="chains" value="A/B=215-538"/>
</dbReference>
<dbReference type="PDB" id="6SUT">
    <property type="method" value="X-ray"/>
    <property type="resolution" value="1.20 A"/>
    <property type="chains" value="A=217-538"/>
</dbReference>
<dbReference type="PDBsum" id="5MX9"/>
<dbReference type="PDBsum" id="6A7W"/>
<dbReference type="PDBsum" id="6SUT"/>
<dbReference type="SMR" id="A0A1C3NEV1"/>
<dbReference type="CARD" id="ARO:3004110">
    <property type="molecule name" value="MCR-2.1"/>
    <property type="mechanism identifier" value="ARO:0001001"/>
    <property type="mechanism name" value="antibiotic target alteration"/>
</dbReference>
<dbReference type="BRENDA" id="2.7.8.43">
    <property type="organism ID" value="2026"/>
</dbReference>
<dbReference type="PHI-base" id="PHI:11669"/>
<dbReference type="Proteomes" id="UP001179946">
    <property type="component" value="Plasmid unnamed5"/>
</dbReference>
<dbReference type="GO" id="GO:0005886">
    <property type="term" value="C:plasma membrane"/>
    <property type="evidence" value="ECO:0007669"/>
    <property type="project" value="UniProtKB-SubCell"/>
</dbReference>
<dbReference type="GO" id="GO:0046872">
    <property type="term" value="F:metal ion binding"/>
    <property type="evidence" value="ECO:0007669"/>
    <property type="project" value="UniProtKB-KW"/>
</dbReference>
<dbReference type="GO" id="GO:0016776">
    <property type="term" value="F:phosphotransferase activity, phosphate group as acceptor"/>
    <property type="evidence" value="ECO:0007669"/>
    <property type="project" value="TreeGrafter"/>
</dbReference>
<dbReference type="GO" id="GO:0009244">
    <property type="term" value="P:lipopolysaccharide core region biosynthetic process"/>
    <property type="evidence" value="ECO:0007669"/>
    <property type="project" value="TreeGrafter"/>
</dbReference>
<dbReference type="CDD" id="cd16017">
    <property type="entry name" value="LptA"/>
    <property type="match status" value="1"/>
</dbReference>
<dbReference type="Gene3D" id="3.40.720.10">
    <property type="entry name" value="Alkaline Phosphatase, subunit A"/>
    <property type="match status" value="1"/>
</dbReference>
<dbReference type="InterPro" id="IPR017850">
    <property type="entry name" value="Alkaline_phosphatase_core_sf"/>
</dbReference>
<dbReference type="InterPro" id="IPR012549">
    <property type="entry name" value="EptA-like_N"/>
</dbReference>
<dbReference type="InterPro" id="IPR040423">
    <property type="entry name" value="PEA_transferase"/>
</dbReference>
<dbReference type="InterPro" id="IPR000917">
    <property type="entry name" value="Sulfatase_N"/>
</dbReference>
<dbReference type="NCBIfam" id="NF028537">
    <property type="entry name" value="P_eth_NH2_trans"/>
    <property type="match status" value="1"/>
</dbReference>
<dbReference type="NCBIfam" id="NF012159">
    <property type="entry name" value="polymyxin_MCR2"/>
    <property type="match status" value="1"/>
</dbReference>
<dbReference type="PANTHER" id="PTHR30443">
    <property type="entry name" value="INNER MEMBRANE PROTEIN"/>
    <property type="match status" value="1"/>
</dbReference>
<dbReference type="PANTHER" id="PTHR30443:SF0">
    <property type="entry name" value="PHOSPHOETHANOLAMINE TRANSFERASE EPTA"/>
    <property type="match status" value="1"/>
</dbReference>
<dbReference type="Pfam" id="PF08019">
    <property type="entry name" value="EptA_B_N"/>
    <property type="match status" value="1"/>
</dbReference>
<dbReference type="Pfam" id="PF00884">
    <property type="entry name" value="Sulfatase"/>
    <property type="match status" value="1"/>
</dbReference>
<dbReference type="SUPFAM" id="SSF53649">
    <property type="entry name" value="Alkaline phosphatase-like"/>
    <property type="match status" value="1"/>
</dbReference>
<dbReference type="PROSITE" id="PS00061">
    <property type="entry name" value="ADH_SHORT"/>
    <property type="match status" value="1"/>
</dbReference>
<accession>A0A1C3NEV1</accession>
<sequence>MTSHHSWYRYSINPFVLMGLVALFLAATANLTFFEKAMAVYPVSDNLGFIISMAVAVMGAMLLIVVLLSYRYVLKPVLILLLIMGAVTSYFTDTYGTVYDTTMLQNAMQTDQAESKDLMNLAFFVRIIGLGVLPSVLVAVAKVNYPTWGKGLIQRAMTWGVSLVLLLVPIGLFSSQYASFFRVHKPVRFYINPITPIYSVGKLASIEYKKATAPTDTIYHAKDAVQTTKPSERKPRLVVFVVGETARADHVQFNGYGRETFPQLAKVDGLANFSQVTSCGTSTAYSVPCMFSYLGQDDYDVDTAKYQENVLDTLDRLGVGILWRDNNSDSKGVMDKLPATQYFDYKSATNNTICNTNPYNECRDVGMLVGLDDYVSANNGKDMLIMLHQMGNHGPAYFKRYDEQFAKFTPVCEGNELAKCEHQSLINAYDNALLATDDFIAKSIDWLKTHEANYDVAMLYVSDHGESLGENGVYLHGMPNAFAPKEQRAVPAFFWSNNTTFKPTASDTVLTHDAITPTLLKLFDVTAGKVKDRAAFIQ</sequence>
<name>MCR2_ECOLX</name>
<keyword id="KW-0002">3D-structure</keyword>
<keyword id="KW-0046">Antibiotic resistance</keyword>
<keyword id="KW-0997">Cell inner membrane</keyword>
<keyword id="KW-1003">Cell membrane</keyword>
<keyword id="KW-1015">Disulfide bond</keyword>
<keyword id="KW-0472">Membrane</keyword>
<keyword id="KW-0479">Metal-binding</keyword>
<keyword id="KW-0597">Phosphoprotein</keyword>
<keyword id="KW-0614">Plasmid</keyword>
<keyword id="KW-0808">Transferase</keyword>
<keyword id="KW-0812">Transmembrane</keyword>
<keyword id="KW-1133">Transmembrane helix</keyword>
<keyword id="KW-0862">Zinc</keyword>
<comment type="function">
    <text evidence="1 4">Probably catalyzes the addition of a phosphoethanolamine moiety to lipid A (PubMed:30194678). Phosphoethanolamine modification of lipid A confers polymyxin resistance (By similarity). Confers resistance to polymyxin-type antibiotics such as colistin (PubMed:30194678).</text>
</comment>
<comment type="catalytic activity">
    <reaction evidence="9">
        <text>lipid A (E. coli) + a 1,2-diacyl-sn-glycero-3-phosphoethanolamine + H(+) = lipid A 4'-(2-aminoethyl diphosphate) (E. coli) + a 1,2-diacyl-sn-glycerol</text>
        <dbReference type="Rhea" id="RHEA:46900"/>
        <dbReference type="ChEBI" id="CHEBI:15378"/>
        <dbReference type="ChEBI" id="CHEBI:17815"/>
        <dbReference type="ChEBI" id="CHEBI:64612"/>
        <dbReference type="ChEBI" id="CHEBI:87097"/>
        <dbReference type="ChEBI" id="CHEBI:134257"/>
        <dbReference type="EC" id="2.7.8.43"/>
    </reaction>
</comment>
<comment type="subunit">
    <text evidence="1">Monomer.</text>
</comment>
<comment type="subcellular location">
    <subcellularLocation>
        <location evidence="1">Cell inner membrane</location>
        <topology evidence="2">Multi-pass membrane protein</topology>
    </subcellularLocation>
</comment>
<comment type="PTM">
    <text evidence="5">Phosphorylated at Thr-283; may represent an intermediate in the catalytic mechanism.</text>
</comment>
<comment type="similarity">
    <text evidence="8">Belongs to the phosphoethanolamine transferase family.</text>
</comment>